<organism>
    <name type="scientific">Streptococcus mutans serotype c (strain ATCC 700610 / UA159)</name>
    <dbReference type="NCBI Taxonomy" id="210007"/>
    <lineage>
        <taxon>Bacteria</taxon>
        <taxon>Bacillati</taxon>
        <taxon>Bacillota</taxon>
        <taxon>Bacilli</taxon>
        <taxon>Lactobacillales</taxon>
        <taxon>Streptococcaceae</taxon>
        <taxon>Streptococcus</taxon>
    </lineage>
</organism>
<feature type="chain" id="PRO_0000163796" description="Ribonuclease Y">
    <location>
        <begin position="1"/>
        <end position="535"/>
    </location>
</feature>
<feature type="transmembrane region" description="Helical" evidence="1">
    <location>
        <begin position="4"/>
        <end position="24"/>
    </location>
</feature>
<feature type="domain" description="KH" evidence="1">
    <location>
        <begin position="225"/>
        <end position="285"/>
    </location>
</feature>
<feature type="domain" description="HD" evidence="2">
    <location>
        <begin position="351"/>
        <end position="444"/>
    </location>
</feature>
<feature type="region of interest" description="Disordered" evidence="3">
    <location>
        <begin position="110"/>
        <end position="141"/>
    </location>
</feature>
<keyword id="KW-1003">Cell membrane</keyword>
<keyword id="KW-0255">Endonuclease</keyword>
<keyword id="KW-0378">Hydrolase</keyword>
<keyword id="KW-0472">Membrane</keyword>
<keyword id="KW-0540">Nuclease</keyword>
<keyword id="KW-1185">Reference proteome</keyword>
<keyword id="KW-0694">RNA-binding</keyword>
<keyword id="KW-0812">Transmembrane</keyword>
<keyword id="KW-1133">Transmembrane helix</keyword>
<reference key="1">
    <citation type="journal article" date="2002" name="Proc. Natl. Acad. Sci. U.S.A.">
        <title>Genome sequence of Streptococcus mutans UA159, a cariogenic dental pathogen.</title>
        <authorList>
            <person name="Ajdic D.J."/>
            <person name="McShan W.M."/>
            <person name="McLaughlin R.E."/>
            <person name="Savic G."/>
            <person name="Chang J."/>
            <person name="Carson M.B."/>
            <person name="Primeaux C."/>
            <person name="Tian R."/>
            <person name="Kenton S."/>
            <person name="Jia H.G."/>
            <person name="Lin S.P."/>
            <person name="Qian Y."/>
            <person name="Li S."/>
            <person name="Zhu H."/>
            <person name="Najar F.Z."/>
            <person name="Lai H."/>
            <person name="White J."/>
            <person name="Roe B.A."/>
            <person name="Ferretti J.J."/>
        </authorList>
    </citation>
    <scope>NUCLEOTIDE SEQUENCE [LARGE SCALE GENOMIC DNA]</scope>
    <source>
        <strain>ATCC 700610 / UA159</strain>
    </source>
</reference>
<protein>
    <recommendedName>
        <fullName evidence="1">Ribonuclease Y</fullName>
        <shortName evidence="1">RNase Y</shortName>
        <ecNumber evidence="1">3.1.-.-</ecNumber>
    </recommendedName>
</protein>
<proteinExistence type="inferred from homology"/>
<comment type="function">
    <text evidence="1">Endoribonuclease that initiates mRNA decay.</text>
</comment>
<comment type="subcellular location">
    <subcellularLocation>
        <location evidence="1">Cell membrane</location>
        <topology evidence="1">Single-pass membrane protein</topology>
    </subcellularLocation>
</comment>
<comment type="similarity">
    <text evidence="1">Belongs to the RNase Y family.</text>
</comment>
<accession>Q8DVK7</accession>
<evidence type="ECO:0000255" key="1">
    <source>
        <dbReference type="HAMAP-Rule" id="MF_00335"/>
    </source>
</evidence>
<evidence type="ECO:0000255" key="2">
    <source>
        <dbReference type="PROSITE-ProRule" id="PRU01175"/>
    </source>
</evidence>
<evidence type="ECO:0000256" key="3">
    <source>
        <dbReference type="SAM" id="MobiDB-lite"/>
    </source>
</evidence>
<sequence>MLNILLTLVFSLIGLVIGYAVISARLKKAKETAELTLLNAEQDAVNARSKAEMDAEHIKKTAERESKAYKKELLIEAKEEARKYREEIEKEFKSERQELKQMDARLTERAASLDRKDENLSSKEQLLDSKEQSLSDKSRHIDERELQVKQLEVKKAEELEKIASLSQEQARGIILSETEKNLAHDIANRIKEAEREIKDRTDKTAKDLLAQAMQRLAGDYVAEQTITTVHLPDDSMKGRIIGREGRNIRTLESLTGIDIIIDDTPEVVVLSGFDPIRREIARMTLEALIQDGRIHPARIEELVEKNRLEMDNRIREYGEAAAFEIGAPNLHPDLIKLMGRLQFRTSYGQNVLRHSVEVGKLAGLLASELGENVDLARRAGFLHDIGKAIDREVEGSHVEIGTEFARKYKENPVVINTIASHHGDVEAQSVIAVLVAAADALSSARPGARNESMENYIKRLRDLEEIATSFDGVQNSYALQAGREIRIMVQPEKLSDDDVTILAHKVREKIENNLDYPGNIKVTVIRELRAIDYAK</sequence>
<dbReference type="EC" id="3.1.-.-" evidence="1"/>
<dbReference type="EMBL" id="AE014133">
    <property type="protein sequence ID" value="AAN58223.1"/>
    <property type="molecule type" value="Genomic_DNA"/>
</dbReference>
<dbReference type="RefSeq" id="NP_720917.1">
    <property type="nucleotide sequence ID" value="NC_004350.2"/>
</dbReference>
<dbReference type="RefSeq" id="WP_002263046.1">
    <property type="nucleotide sequence ID" value="NC_004350.2"/>
</dbReference>
<dbReference type="SMR" id="Q8DVK7"/>
<dbReference type="STRING" id="210007.SMU_475"/>
<dbReference type="DNASU" id="1027977"/>
<dbReference type="KEGG" id="smu:SMU_475"/>
<dbReference type="PATRIC" id="fig|210007.7.peg.417"/>
<dbReference type="eggNOG" id="COG1418">
    <property type="taxonomic scope" value="Bacteria"/>
</dbReference>
<dbReference type="eggNOG" id="COG4372">
    <property type="taxonomic scope" value="Bacteria"/>
</dbReference>
<dbReference type="HOGENOM" id="CLU_028328_1_0_9"/>
<dbReference type="OrthoDB" id="9803205at2"/>
<dbReference type="PhylomeDB" id="Q8DVK7"/>
<dbReference type="Proteomes" id="UP000002512">
    <property type="component" value="Chromosome"/>
</dbReference>
<dbReference type="GO" id="GO:0005886">
    <property type="term" value="C:plasma membrane"/>
    <property type="evidence" value="ECO:0007669"/>
    <property type="project" value="UniProtKB-SubCell"/>
</dbReference>
<dbReference type="GO" id="GO:0003723">
    <property type="term" value="F:RNA binding"/>
    <property type="evidence" value="ECO:0007669"/>
    <property type="project" value="UniProtKB-UniRule"/>
</dbReference>
<dbReference type="GO" id="GO:0004521">
    <property type="term" value="F:RNA endonuclease activity"/>
    <property type="evidence" value="ECO:0007669"/>
    <property type="project" value="UniProtKB-UniRule"/>
</dbReference>
<dbReference type="GO" id="GO:0006402">
    <property type="term" value="P:mRNA catabolic process"/>
    <property type="evidence" value="ECO:0007669"/>
    <property type="project" value="UniProtKB-UniRule"/>
</dbReference>
<dbReference type="CDD" id="cd00077">
    <property type="entry name" value="HDc"/>
    <property type="match status" value="1"/>
</dbReference>
<dbReference type="CDD" id="cd22431">
    <property type="entry name" value="KH-I_RNaseY"/>
    <property type="match status" value="1"/>
</dbReference>
<dbReference type="FunFam" id="1.10.3210.10:FF:000003">
    <property type="entry name" value="Ribonuclease Y"/>
    <property type="match status" value="1"/>
</dbReference>
<dbReference type="Gene3D" id="1.10.3210.10">
    <property type="entry name" value="Hypothetical protein af1432"/>
    <property type="match status" value="1"/>
</dbReference>
<dbReference type="Gene3D" id="3.30.1370.10">
    <property type="entry name" value="K Homology domain, type 1"/>
    <property type="match status" value="1"/>
</dbReference>
<dbReference type="HAMAP" id="MF_00335">
    <property type="entry name" value="RNase_Y"/>
    <property type="match status" value="1"/>
</dbReference>
<dbReference type="InterPro" id="IPR003607">
    <property type="entry name" value="HD/PDEase_dom"/>
</dbReference>
<dbReference type="InterPro" id="IPR006674">
    <property type="entry name" value="HD_domain"/>
</dbReference>
<dbReference type="InterPro" id="IPR006675">
    <property type="entry name" value="HDIG_dom"/>
</dbReference>
<dbReference type="InterPro" id="IPR004087">
    <property type="entry name" value="KH_dom"/>
</dbReference>
<dbReference type="InterPro" id="IPR004088">
    <property type="entry name" value="KH_dom_type_1"/>
</dbReference>
<dbReference type="InterPro" id="IPR036612">
    <property type="entry name" value="KH_dom_type_1_sf"/>
</dbReference>
<dbReference type="InterPro" id="IPR017705">
    <property type="entry name" value="Ribonuclease_Y"/>
</dbReference>
<dbReference type="InterPro" id="IPR022711">
    <property type="entry name" value="RNase_Y_N"/>
</dbReference>
<dbReference type="NCBIfam" id="TIGR00277">
    <property type="entry name" value="HDIG"/>
    <property type="match status" value="1"/>
</dbReference>
<dbReference type="NCBIfam" id="NF000997">
    <property type="entry name" value="PRK00106.1"/>
    <property type="match status" value="1"/>
</dbReference>
<dbReference type="NCBIfam" id="TIGR03319">
    <property type="entry name" value="RNase_Y"/>
    <property type="match status" value="1"/>
</dbReference>
<dbReference type="PANTHER" id="PTHR12826">
    <property type="entry name" value="RIBONUCLEASE Y"/>
    <property type="match status" value="1"/>
</dbReference>
<dbReference type="PANTHER" id="PTHR12826:SF15">
    <property type="entry name" value="RIBONUCLEASE Y"/>
    <property type="match status" value="1"/>
</dbReference>
<dbReference type="Pfam" id="PF01966">
    <property type="entry name" value="HD"/>
    <property type="match status" value="1"/>
</dbReference>
<dbReference type="Pfam" id="PF00013">
    <property type="entry name" value="KH_1"/>
    <property type="match status" value="1"/>
</dbReference>
<dbReference type="Pfam" id="PF12072">
    <property type="entry name" value="RNase_Y_N"/>
    <property type="match status" value="1"/>
</dbReference>
<dbReference type="SMART" id="SM00471">
    <property type="entry name" value="HDc"/>
    <property type="match status" value="1"/>
</dbReference>
<dbReference type="SMART" id="SM00322">
    <property type="entry name" value="KH"/>
    <property type="match status" value="1"/>
</dbReference>
<dbReference type="SUPFAM" id="SSF54791">
    <property type="entry name" value="Eukaryotic type KH-domain (KH-domain type I)"/>
    <property type="match status" value="1"/>
</dbReference>
<dbReference type="SUPFAM" id="SSF109604">
    <property type="entry name" value="HD-domain/PDEase-like"/>
    <property type="match status" value="1"/>
</dbReference>
<dbReference type="PROSITE" id="PS51831">
    <property type="entry name" value="HD"/>
    <property type="match status" value="1"/>
</dbReference>
<dbReference type="PROSITE" id="PS50084">
    <property type="entry name" value="KH_TYPE_1"/>
    <property type="match status" value="1"/>
</dbReference>
<gene>
    <name evidence="1" type="primary">rny</name>
    <name type="ordered locus">SMU_475</name>
</gene>
<name>RNY_STRMU</name>